<dbReference type="EC" id="6.1.1.3" evidence="1"/>
<dbReference type="EMBL" id="CP001161">
    <property type="protein sequence ID" value="ACL30498.1"/>
    <property type="molecule type" value="Genomic_DNA"/>
</dbReference>
<dbReference type="RefSeq" id="WP_009874081.1">
    <property type="nucleotide sequence ID" value="NC_011833.1"/>
</dbReference>
<dbReference type="SMR" id="B8D8S6"/>
<dbReference type="KEGG" id="bap:BUAP5A_123"/>
<dbReference type="HOGENOM" id="CLU_008554_0_1_6"/>
<dbReference type="OrthoDB" id="9802304at2"/>
<dbReference type="Proteomes" id="UP000006904">
    <property type="component" value="Chromosome"/>
</dbReference>
<dbReference type="GO" id="GO:0005829">
    <property type="term" value="C:cytosol"/>
    <property type="evidence" value="ECO:0007669"/>
    <property type="project" value="TreeGrafter"/>
</dbReference>
<dbReference type="GO" id="GO:0005524">
    <property type="term" value="F:ATP binding"/>
    <property type="evidence" value="ECO:0007669"/>
    <property type="project" value="UniProtKB-UniRule"/>
</dbReference>
<dbReference type="GO" id="GO:0046872">
    <property type="term" value="F:metal ion binding"/>
    <property type="evidence" value="ECO:0007669"/>
    <property type="project" value="UniProtKB-KW"/>
</dbReference>
<dbReference type="GO" id="GO:0004829">
    <property type="term" value="F:threonine-tRNA ligase activity"/>
    <property type="evidence" value="ECO:0007669"/>
    <property type="project" value="UniProtKB-UniRule"/>
</dbReference>
<dbReference type="GO" id="GO:0000049">
    <property type="term" value="F:tRNA binding"/>
    <property type="evidence" value="ECO:0007669"/>
    <property type="project" value="UniProtKB-KW"/>
</dbReference>
<dbReference type="GO" id="GO:0006435">
    <property type="term" value="P:threonyl-tRNA aminoacylation"/>
    <property type="evidence" value="ECO:0007669"/>
    <property type="project" value="UniProtKB-UniRule"/>
</dbReference>
<dbReference type="CDD" id="cd01667">
    <property type="entry name" value="TGS_ThrRS"/>
    <property type="match status" value="1"/>
</dbReference>
<dbReference type="CDD" id="cd00860">
    <property type="entry name" value="ThrRS_anticodon"/>
    <property type="match status" value="1"/>
</dbReference>
<dbReference type="CDD" id="cd00771">
    <property type="entry name" value="ThrRS_core"/>
    <property type="match status" value="1"/>
</dbReference>
<dbReference type="FunFam" id="3.30.930.10:FF:000002">
    <property type="entry name" value="Threonine--tRNA ligase"/>
    <property type="match status" value="1"/>
</dbReference>
<dbReference type="FunFam" id="3.40.50.800:FF:000001">
    <property type="entry name" value="Threonine--tRNA ligase"/>
    <property type="match status" value="1"/>
</dbReference>
<dbReference type="Gene3D" id="3.10.20.30">
    <property type="match status" value="1"/>
</dbReference>
<dbReference type="Gene3D" id="3.30.54.20">
    <property type="match status" value="1"/>
</dbReference>
<dbReference type="Gene3D" id="3.40.50.800">
    <property type="entry name" value="Anticodon-binding domain"/>
    <property type="match status" value="1"/>
</dbReference>
<dbReference type="Gene3D" id="3.30.930.10">
    <property type="entry name" value="Bira Bifunctional Protein, Domain 2"/>
    <property type="match status" value="1"/>
</dbReference>
<dbReference type="Gene3D" id="3.30.980.10">
    <property type="entry name" value="Threonyl-trna Synthetase, Chain A, domain 2"/>
    <property type="match status" value="1"/>
</dbReference>
<dbReference type="HAMAP" id="MF_00184">
    <property type="entry name" value="Thr_tRNA_synth"/>
    <property type="match status" value="1"/>
</dbReference>
<dbReference type="InterPro" id="IPR002314">
    <property type="entry name" value="aa-tRNA-synt_IIb"/>
</dbReference>
<dbReference type="InterPro" id="IPR006195">
    <property type="entry name" value="aa-tRNA-synth_II"/>
</dbReference>
<dbReference type="InterPro" id="IPR045864">
    <property type="entry name" value="aa-tRNA-synth_II/BPL/LPL"/>
</dbReference>
<dbReference type="InterPro" id="IPR004154">
    <property type="entry name" value="Anticodon-bd"/>
</dbReference>
<dbReference type="InterPro" id="IPR036621">
    <property type="entry name" value="Anticodon-bd_dom_sf"/>
</dbReference>
<dbReference type="InterPro" id="IPR012675">
    <property type="entry name" value="Beta-grasp_dom_sf"/>
</dbReference>
<dbReference type="InterPro" id="IPR004095">
    <property type="entry name" value="TGS"/>
</dbReference>
<dbReference type="InterPro" id="IPR002320">
    <property type="entry name" value="Thr-tRNA-ligase_IIa"/>
</dbReference>
<dbReference type="InterPro" id="IPR018163">
    <property type="entry name" value="Thr/Ala-tRNA-synth_IIc_edit"/>
</dbReference>
<dbReference type="InterPro" id="IPR047246">
    <property type="entry name" value="ThrRS_anticodon"/>
</dbReference>
<dbReference type="InterPro" id="IPR033728">
    <property type="entry name" value="ThrRS_core"/>
</dbReference>
<dbReference type="InterPro" id="IPR012947">
    <property type="entry name" value="tRNA_SAD"/>
</dbReference>
<dbReference type="NCBIfam" id="TIGR00418">
    <property type="entry name" value="thrS"/>
    <property type="match status" value="1"/>
</dbReference>
<dbReference type="PANTHER" id="PTHR11451:SF44">
    <property type="entry name" value="THREONINE--TRNA LIGASE, CHLOROPLASTIC_MITOCHONDRIAL 2"/>
    <property type="match status" value="1"/>
</dbReference>
<dbReference type="PANTHER" id="PTHR11451">
    <property type="entry name" value="THREONINE-TRNA LIGASE"/>
    <property type="match status" value="1"/>
</dbReference>
<dbReference type="Pfam" id="PF03129">
    <property type="entry name" value="HGTP_anticodon"/>
    <property type="match status" value="1"/>
</dbReference>
<dbReference type="Pfam" id="PF00587">
    <property type="entry name" value="tRNA-synt_2b"/>
    <property type="match status" value="1"/>
</dbReference>
<dbReference type="Pfam" id="PF07973">
    <property type="entry name" value="tRNA_SAD"/>
    <property type="match status" value="1"/>
</dbReference>
<dbReference type="PRINTS" id="PR01047">
    <property type="entry name" value="TRNASYNTHTHR"/>
</dbReference>
<dbReference type="SMART" id="SM00863">
    <property type="entry name" value="tRNA_SAD"/>
    <property type="match status" value="1"/>
</dbReference>
<dbReference type="SUPFAM" id="SSF52954">
    <property type="entry name" value="Class II aaRS ABD-related"/>
    <property type="match status" value="1"/>
</dbReference>
<dbReference type="SUPFAM" id="SSF55681">
    <property type="entry name" value="Class II aaRS and biotin synthetases"/>
    <property type="match status" value="1"/>
</dbReference>
<dbReference type="SUPFAM" id="SSF55186">
    <property type="entry name" value="ThrRS/AlaRS common domain"/>
    <property type="match status" value="1"/>
</dbReference>
<dbReference type="PROSITE" id="PS50862">
    <property type="entry name" value="AA_TRNA_LIGASE_II"/>
    <property type="match status" value="1"/>
</dbReference>
<dbReference type="PROSITE" id="PS51880">
    <property type="entry name" value="TGS"/>
    <property type="match status" value="1"/>
</dbReference>
<comment type="function">
    <text evidence="1">Catalyzes the attachment of threonine to tRNA(Thr) in a two-step reaction: L-threonine is first activated by ATP to form Thr-AMP and then transferred to the acceptor end of tRNA(Thr). Also edits incorrectly charged L-seryl-tRNA(Thr).</text>
</comment>
<comment type="catalytic activity">
    <reaction evidence="1">
        <text>tRNA(Thr) + L-threonine + ATP = L-threonyl-tRNA(Thr) + AMP + diphosphate + H(+)</text>
        <dbReference type="Rhea" id="RHEA:24624"/>
        <dbReference type="Rhea" id="RHEA-COMP:9670"/>
        <dbReference type="Rhea" id="RHEA-COMP:9704"/>
        <dbReference type="ChEBI" id="CHEBI:15378"/>
        <dbReference type="ChEBI" id="CHEBI:30616"/>
        <dbReference type="ChEBI" id="CHEBI:33019"/>
        <dbReference type="ChEBI" id="CHEBI:57926"/>
        <dbReference type="ChEBI" id="CHEBI:78442"/>
        <dbReference type="ChEBI" id="CHEBI:78534"/>
        <dbReference type="ChEBI" id="CHEBI:456215"/>
        <dbReference type="EC" id="6.1.1.3"/>
    </reaction>
</comment>
<comment type="cofactor">
    <cofactor evidence="1">
        <name>Zn(2+)</name>
        <dbReference type="ChEBI" id="CHEBI:29105"/>
    </cofactor>
    <text evidence="1">Binds 1 zinc ion per subunit.</text>
</comment>
<comment type="subunit">
    <text evidence="1">Homodimer.</text>
</comment>
<comment type="subcellular location">
    <subcellularLocation>
        <location evidence="1">Cytoplasm</location>
    </subcellularLocation>
</comment>
<comment type="similarity">
    <text evidence="1">Belongs to the class-II aminoacyl-tRNA synthetase family.</text>
</comment>
<name>SYT_BUCA5</name>
<proteinExistence type="inferred from homology"/>
<evidence type="ECO:0000255" key="1">
    <source>
        <dbReference type="HAMAP-Rule" id="MF_00184"/>
    </source>
</evidence>
<evidence type="ECO:0000255" key="2">
    <source>
        <dbReference type="PROSITE-ProRule" id="PRU01228"/>
    </source>
</evidence>
<organism>
    <name type="scientific">Buchnera aphidicola subsp. Acyrthosiphon pisum (strain 5A)</name>
    <dbReference type="NCBI Taxonomy" id="563178"/>
    <lineage>
        <taxon>Bacteria</taxon>
        <taxon>Pseudomonadati</taxon>
        <taxon>Pseudomonadota</taxon>
        <taxon>Gammaproteobacteria</taxon>
        <taxon>Enterobacterales</taxon>
        <taxon>Erwiniaceae</taxon>
        <taxon>Buchnera</taxon>
    </lineage>
</organism>
<gene>
    <name evidence="1" type="primary">thrS</name>
    <name type="ordered locus">BUAP5A_123</name>
</gene>
<protein>
    <recommendedName>
        <fullName evidence="1">Threonine--tRNA ligase</fullName>
        <ecNumber evidence="1">6.1.1.3</ecNumber>
    </recommendedName>
    <alternativeName>
        <fullName evidence="1">Threonyl-tRNA synthetase</fullName>
        <shortName evidence="1">ThrRS</shortName>
    </alternativeName>
</protein>
<accession>B8D8S6</accession>
<reference key="1">
    <citation type="journal article" date="2009" name="Science">
        <title>The dynamics and time scale of ongoing genomic erosion in symbiotic bacteria.</title>
        <authorList>
            <person name="Moran N.A."/>
            <person name="McLaughlin H.J."/>
            <person name="Sorek R."/>
        </authorList>
    </citation>
    <scope>NUCLEOTIDE SEQUENCE [LARGE SCALE GENOMIC DNA]</scope>
    <source>
        <strain>5A</strain>
    </source>
</reference>
<sequence>MPVIRFYDGSQQVYEHSVSLIEIIKNKKPSIMKSLIAISVNNHFSNLNTFIREDAFIEFVDQKNYKALNIIRYSCAQLLSYAIKNIWPLAQIATSNIIEDGFYCDIDFKRSISEKDLILLENQMKTLVKREYNILNKLISYSEAREIFQKCFEKYKVSLIDENINCNSKVSLYYHENYADIDIGLQVFNIKFCKYFKLQKIGGVYWKKNKNNKMLQRIYGTAWTNKQELDKHLDYLNELEKRDHRKIGKFLQLYHMQEESPGMIFWHNKGWIIFNELQNFVRVKLKEYKYEEVKTPLLIDKLIWKQSGHWDNYKNAIFTTLSEHREYCIKPMNCPGHVQIFNSRLKSYRDLPIRMAEFGSCHRNEPSGSLHGLMRVRNFTQDDAHIFCTREQVRSEINDCIKMIYDLYSTFHFKKILVKLSTRPEKRIGTDSLWNESEKDLSDMLIENHLSFEYQSGEGAFYGPKIEFILQDSLDRNWQCGTIQLDFYLPLRLSSFYINEKNEKKVPVIIHRAILGSIERFIGILIEECSGNLPTWLSPVQVVIISITDISSGYVKELFKKFSDVNIRIECDLRNEKIGFKIREHTLRRIPYILICGEKESSSKKISVRNRQGHNFGMIDVDFFIKKLQKEIITRNFYQMEE</sequence>
<feature type="chain" id="PRO_1000199533" description="Threonine--tRNA ligase">
    <location>
        <begin position="1"/>
        <end position="642"/>
    </location>
</feature>
<feature type="domain" description="TGS" evidence="2">
    <location>
        <begin position="1"/>
        <end position="61"/>
    </location>
</feature>
<feature type="region of interest" description="Catalytic" evidence="1">
    <location>
        <begin position="243"/>
        <end position="534"/>
    </location>
</feature>
<feature type="binding site" evidence="1">
    <location>
        <position position="334"/>
    </location>
    <ligand>
        <name>Zn(2+)</name>
        <dbReference type="ChEBI" id="CHEBI:29105"/>
    </ligand>
</feature>
<feature type="binding site" evidence="1">
    <location>
        <position position="385"/>
    </location>
    <ligand>
        <name>Zn(2+)</name>
        <dbReference type="ChEBI" id="CHEBI:29105"/>
    </ligand>
</feature>
<feature type="binding site" evidence="1">
    <location>
        <position position="511"/>
    </location>
    <ligand>
        <name>Zn(2+)</name>
        <dbReference type="ChEBI" id="CHEBI:29105"/>
    </ligand>
</feature>
<keyword id="KW-0030">Aminoacyl-tRNA synthetase</keyword>
<keyword id="KW-0067">ATP-binding</keyword>
<keyword id="KW-0963">Cytoplasm</keyword>
<keyword id="KW-0436">Ligase</keyword>
<keyword id="KW-0479">Metal-binding</keyword>
<keyword id="KW-0547">Nucleotide-binding</keyword>
<keyword id="KW-0648">Protein biosynthesis</keyword>
<keyword id="KW-0694">RNA-binding</keyword>
<keyword id="KW-0820">tRNA-binding</keyword>
<keyword id="KW-0862">Zinc</keyword>